<proteinExistence type="inferred from homology"/>
<evidence type="ECO:0000255" key="1">
    <source>
        <dbReference type="HAMAP-Rule" id="MF_00429"/>
    </source>
</evidence>
<name>NQRE_HAEIG</name>
<dbReference type="EC" id="7.2.1.1" evidence="1"/>
<dbReference type="EMBL" id="CP000672">
    <property type="protein sequence ID" value="ABQ99677.1"/>
    <property type="molecule type" value="Genomic_DNA"/>
</dbReference>
<dbReference type="SMR" id="A5UFX2"/>
<dbReference type="KEGG" id="hiq:CGSHiGG_03445"/>
<dbReference type="HOGENOM" id="CLU_095255_0_0_6"/>
<dbReference type="Proteomes" id="UP000001990">
    <property type="component" value="Chromosome"/>
</dbReference>
<dbReference type="GO" id="GO:0009276">
    <property type="term" value="C:Gram-negative-bacterium-type cell wall"/>
    <property type="evidence" value="ECO:0007669"/>
    <property type="project" value="InterPro"/>
</dbReference>
<dbReference type="GO" id="GO:0005886">
    <property type="term" value="C:plasma membrane"/>
    <property type="evidence" value="ECO:0007669"/>
    <property type="project" value="UniProtKB-SubCell"/>
</dbReference>
<dbReference type="GO" id="GO:0016655">
    <property type="term" value="F:oxidoreductase activity, acting on NAD(P)H, quinone or similar compound as acceptor"/>
    <property type="evidence" value="ECO:0007669"/>
    <property type="project" value="UniProtKB-UniRule"/>
</dbReference>
<dbReference type="GO" id="GO:0022904">
    <property type="term" value="P:respiratory electron transport chain"/>
    <property type="evidence" value="ECO:0007669"/>
    <property type="project" value="InterPro"/>
</dbReference>
<dbReference type="GO" id="GO:0006814">
    <property type="term" value="P:sodium ion transport"/>
    <property type="evidence" value="ECO:0007669"/>
    <property type="project" value="UniProtKB-UniRule"/>
</dbReference>
<dbReference type="HAMAP" id="MF_00429">
    <property type="entry name" value="NqrE"/>
    <property type="match status" value="1"/>
</dbReference>
<dbReference type="InterPro" id="IPR003667">
    <property type="entry name" value="NqrDE/RnfAE"/>
</dbReference>
<dbReference type="InterPro" id="IPR050133">
    <property type="entry name" value="NqrDE/RnfAE_oxidrdctase"/>
</dbReference>
<dbReference type="InterPro" id="IPR010967">
    <property type="entry name" value="NqrE"/>
</dbReference>
<dbReference type="NCBIfam" id="TIGR01940">
    <property type="entry name" value="nqrE"/>
    <property type="match status" value="1"/>
</dbReference>
<dbReference type="PANTHER" id="PTHR30335">
    <property type="entry name" value="INTEGRAL MEMBRANE PROTEIN OF SOXR-REDUCING COMPLEX"/>
    <property type="match status" value="1"/>
</dbReference>
<dbReference type="PANTHER" id="PTHR30335:SF1">
    <property type="entry name" value="NA(+)-TRANSLOCATING NADH-QUINONE REDUCTASE SUBUNIT E"/>
    <property type="match status" value="1"/>
</dbReference>
<dbReference type="Pfam" id="PF02508">
    <property type="entry name" value="Rnf-Nqr"/>
    <property type="match status" value="1"/>
</dbReference>
<dbReference type="PIRSF" id="PIRSF006102">
    <property type="entry name" value="NQR_DE"/>
    <property type="match status" value="1"/>
</dbReference>
<sequence length="198" mass="21310">MEHYISLFVKAVFIENMALSFFLGMCTFLAVSKKVSTAFGLGIAVTFVLGIAVPVNQLIYANVLKENALIEGVDLSFLNFITFIGVIAGLVQILEMVLDKFMPSLYNALGIFLPLIAVNCAIFGGVSFMVQRDYNFPESIVYGFGSGLGWMLAIVALAGLTEKMKYADIPAGLKGLGITFISVGLMALGFMSFSGIQL</sequence>
<accession>A5UFX2</accession>
<keyword id="KW-0997">Cell inner membrane</keyword>
<keyword id="KW-1003">Cell membrane</keyword>
<keyword id="KW-0406">Ion transport</keyword>
<keyword id="KW-0472">Membrane</keyword>
<keyword id="KW-0520">NAD</keyword>
<keyword id="KW-0915">Sodium</keyword>
<keyword id="KW-0739">Sodium transport</keyword>
<keyword id="KW-1278">Translocase</keyword>
<keyword id="KW-0812">Transmembrane</keyword>
<keyword id="KW-1133">Transmembrane helix</keyword>
<keyword id="KW-0813">Transport</keyword>
<keyword id="KW-0830">Ubiquinone</keyword>
<protein>
    <recommendedName>
        <fullName evidence="1">Na(+)-translocating NADH-quinone reductase subunit E</fullName>
        <shortName evidence="1">Na(+)-NQR subunit E</shortName>
        <shortName evidence="1">Na(+)-translocating NQR subunit E</shortName>
        <ecNumber evidence="1">7.2.1.1</ecNumber>
    </recommendedName>
    <alternativeName>
        <fullName evidence="1">NQR complex subunit E</fullName>
    </alternativeName>
    <alternativeName>
        <fullName evidence="1">NQR-1 subunit E</fullName>
    </alternativeName>
</protein>
<gene>
    <name evidence="1" type="primary">nqrE</name>
    <name type="ordered locus">CGSHiGG_03445</name>
</gene>
<organism>
    <name type="scientific">Haemophilus influenzae (strain PittGG)</name>
    <dbReference type="NCBI Taxonomy" id="374931"/>
    <lineage>
        <taxon>Bacteria</taxon>
        <taxon>Pseudomonadati</taxon>
        <taxon>Pseudomonadota</taxon>
        <taxon>Gammaproteobacteria</taxon>
        <taxon>Pasteurellales</taxon>
        <taxon>Pasteurellaceae</taxon>
        <taxon>Haemophilus</taxon>
    </lineage>
</organism>
<reference key="1">
    <citation type="journal article" date="2007" name="Genome Biol.">
        <title>Characterization and modeling of the Haemophilus influenzae core and supragenomes based on the complete genomic sequences of Rd and 12 clinical nontypeable strains.</title>
        <authorList>
            <person name="Hogg J.S."/>
            <person name="Hu F.Z."/>
            <person name="Janto B."/>
            <person name="Boissy R."/>
            <person name="Hayes J."/>
            <person name="Keefe R."/>
            <person name="Post J.C."/>
            <person name="Ehrlich G.D."/>
        </authorList>
    </citation>
    <scope>NUCLEOTIDE SEQUENCE [LARGE SCALE GENOMIC DNA]</scope>
    <source>
        <strain>PittGG</strain>
    </source>
</reference>
<comment type="function">
    <text evidence="1">NQR complex catalyzes the reduction of ubiquinone-1 to ubiquinol by two successive reactions, coupled with the transport of Na(+) ions from the cytoplasm to the periplasm. NqrA to NqrE are probably involved in the second step, the conversion of ubisemiquinone to ubiquinol.</text>
</comment>
<comment type="catalytic activity">
    <reaction evidence="1">
        <text>a ubiquinone + n Na(+)(in) + NADH + H(+) = a ubiquinol + n Na(+)(out) + NAD(+)</text>
        <dbReference type="Rhea" id="RHEA:47748"/>
        <dbReference type="Rhea" id="RHEA-COMP:9565"/>
        <dbReference type="Rhea" id="RHEA-COMP:9566"/>
        <dbReference type="ChEBI" id="CHEBI:15378"/>
        <dbReference type="ChEBI" id="CHEBI:16389"/>
        <dbReference type="ChEBI" id="CHEBI:17976"/>
        <dbReference type="ChEBI" id="CHEBI:29101"/>
        <dbReference type="ChEBI" id="CHEBI:57540"/>
        <dbReference type="ChEBI" id="CHEBI:57945"/>
        <dbReference type="EC" id="7.2.1.1"/>
    </reaction>
</comment>
<comment type="subunit">
    <text evidence="1">Composed of six subunits; NqrA, NqrB, NqrC, NqrD, NqrE and NqrF.</text>
</comment>
<comment type="subcellular location">
    <subcellularLocation>
        <location evidence="1">Cell inner membrane</location>
        <topology evidence="1">Multi-pass membrane protein</topology>
    </subcellularLocation>
</comment>
<comment type="similarity">
    <text evidence="1">Belongs to the NqrDE/RnfAE family.</text>
</comment>
<feature type="chain" id="PRO_1000060193" description="Na(+)-translocating NADH-quinone reductase subunit E">
    <location>
        <begin position="1"/>
        <end position="198"/>
    </location>
</feature>
<feature type="transmembrane region" description="Helical" evidence="1">
    <location>
        <begin position="11"/>
        <end position="31"/>
    </location>
</feature>
<feature type="transmembrane region" description="Helical" evidence="1">
    <location>
        <begin position="35"/>
        <end position="55"/>
    </location>
</feature>
<feature type="transmembrane region" description="Helical" evidence="1">
    <location>
        <begin position="77"/>
        <end position="97"/>
    </location>
</feature>
<feature type="transmembrane region" description="Helical" evidence="1">
    <location>
        <begin position="110"/>
        <end position="130"/>
    </location>
</feature>
<feature type="transmembrane region" description="Helical" evidence="1">
    <location>
        <begin position="140"/>
        <end position="160"/>
    </location>
</feature>
<feature type="transmembrane region" description="Helical" evidence="1">
    <location>
        <begin position="176"/>
        <end position="196"/>
    </location>
</feature>